<proteinExistence type="evidence at protein level"/>
<feature type="chain" id="PRO_0000098398" description="Isoleucine--tRNA ligase">
    <location>
        <begin position="1"/>
        <end position="920"/>
    </location>
</feature>
<feature type="short sequence motif" description="'HIGH' region">
    <location>
        <begin position="58"/>
        <end position="68"/>
    </location>
</feature>
<feature type="short sequence motif" description="'KMSKS' region">
    <location>
        <begin position="610"/>
        <end position="614"/>
    </location>
</feature>
<feature type="binding site" evidence="1">
    <location>
        <position position="569"/>
    </location>
    <ligand>
        <name>L-isoleucyl-5'-AMP</name>
        <dbReference type="ChEBI" id="CHEBI:178002"/>
    </ligand>
</feature>
<feature type="binding site" evidence="1">
    <location>
        <position position="613"/>
    </location>
    <ligand>
        <name>ATP</name>
        <dbReference type="ChEBI" id="CHEBI:30616"/>
    </ligand>
</feature>
<feature type="binding site" evidence="1">
    <location>
        <position position="895"/>
    </location>
    <ligand>
        <name>Zn(2+)</name>
        <dbReference type="ChEBI" id="CHEBI:29105"/>
    </ligand>
</feature>
<feature type="binding site" evidence="1">
    <location>
        <position position="898"/>
    </location>
    <ligand>
        <name>Zn(2+)</name>
        <dbReference type="ChEBI" id="CHEBI:29105"/>
    </ligand>
</feature>
<feature type="binding site" evidence="1">
    <location>
        <position position="910"/>
    </location>
    <ligand>
        <name>Zn(2+)</name>
        <dbReference type="ChEBI" id="CHEBI:29105"/>
    </ligand>
</feature>
<feature type="binding site" evidence="1">
    <location>
        <position position="913"/>
    </location>
    <ligand>
        <name>Zn(2+)</name>
        <dbReference type="ChEBI" id="CHEBI:29105"/>
    </ligand>
</feature>
<feature type="helix" evidence="3">
    <location>
        <begin position="5"/>
        <end position="7"/>
    </location>
</feature>
<feature type="helix" evidence="3">
    <location>
        <begin position="21"/>
        <end position="34"/>
    </location>
</feature>
<feature type="helix" evidence="3">
    <location>
        <begin position="37"/>
        <end position="43"/>
    </location>
</feature>
<feature type="strand" evidence="3">
    <location>
        <begin position="49"/>
        <end position="53"/>
    </location>
</feature>
<feature type="strand" evidence="2">
    <location>
        <begin position="59"/>
        <end position="62"/>
    </location>
</feature>
<feature type="helix" evidence="3">
    <location>
        <begin position="66"/>
        <end position="85"/>
    </location>
</feature>
<feature type="strand" evidence="3">
    <location>
        <begin position="88"/>
        <end position="90"/>
    </location>
</feature>
<feature type="strand" evidence="3">
    <location>
        <begin position="94"/>
        <end position="96"/>
    </location>
</feature>
<feature type="helix" evidence="3">
    <location>
        <begin position="100"/>
        <end position="112"/>
    </location>
</feature>
<feature type="helix" evidence="3">
    <location>
        <begin position="120"/>
        <end position="143"/>
    </location>
</feature>
<feature type="turn" evidence="3">
    <location>
        <begin position="144"/>
        <end position="146"/>
    </location>
</feature>
<feature type="helix" evidence="3">
    <location>
        <begin position="160"/>
        <end position="175"/>
    </location>
</feature>
<feature type="strand" evidence="3">
    <location>
        <begin position="179"/>
        <end position="189"/>
    </location>
</feature>
<feature type="turn" evidence="3">
    <location>
        <begin position="190"/>
        <end position="193"/>
    </location>
</feature>
<feature type="helix" evidence="3">
    <location>
        <begin position="198"/>
        <end position="200"/>
    </location>
</feature>
<feature type="strand" evidence="3">
    <location>
        <begin position="201"/>
        <end position="217"/>
    </location>
</feature>
<feature type="helix" evidence="3">
    <location>
        <begin position="219"/>
        <end position="225"/>
    </location>
</feature>
<feature type="strand" evidence="3">
    <location>
        <begin position="231"/>
        <end position="237"/>
    </location>
</feature>
<feature type="helix" evidence="3">
    <location>
        <begin position="239"/>
        <end position="244"/>
    </location>
</feature>
<feature type="strand" evidence="3">
    <location>
        <begin position="247"/>
        <end position="251"/>
    </location>
</feature>
<feature type="strand" evidence="3">
    <location>
        <begin position="255"/>
        <end position="259"/>
    </location>
</feature>
<feature type="strand" evidence="3">
    <location>
        <begin position="263"/>
        <end position="266"/>
    </location>
</feature>
<feature type="helix" evidence="3">
    <location>
        <begin position="267"/>
        <end position="275"/>
    </location>
</feature>
<feature type="strand" evidence="3">
    <location>
        <begin position="283"/>
        <end position="288"/>
    </location>
</feature>
<feature type="helix" evidence="3">
    <location>
        <begin position="289"/>
        <end position="292"/>
    </location>
</feature>
<feature type="strand" evidence="3">
    <location>
        <begin position="296"/>
        <end position="298"/>
    </location>
</feature>
<feature type="turn" evidence="3">
    <location>
        <begin position="300"/>
        <end position="302"/>
    </location>
</feature>
<feature type="strand" evidence="3">
    <location>
        <begin position="305"/>
        <end position="313"/>
    </location>
</feature>
<feature type="strand" evidence="3">
    <location>
        <begin position="316"/>
        <end position="319"/>
    </location>
</feature>
<feature type="strand" evidence="3">
    <location>
        <begin position="321"/>
        <end position="325"/>
    </location>
</feature>
<feature type="turn" evidence="3">
    <location>
        <begin position="327"/>
        <end position="329"/>
    </location>
</feature>
<feature type="helix" evidence="3">
    <location>
        <begin position="331"/>
        <end position="339"/>
    </location>
</feature>
<feature type="strand" evidence="3">
    <location>
        <begin position="352"/>
        <end position="354"/>
    </location>
</feature>
<feature type="helix" evidence="3">
    <location>
        <begin position="357"/>
        <end position="360"/>
    </location>
</feature>
<feature type="helix" evidence="3">
    <location>
        <begin position="366"/>
        <end position="368"/>
    </location>
</feature>
<feature type="helix" evidence="3">
    <location>
        <begin position="373"/>
        <end position="383"/>
    </location>
</feature>
<feature type="helix" evidence="3">
    <location>
        <begin position="384"/>
        <end position="387"/>
    </location>
</feature>
<feature type="strand" evidence="3">
    <location>
        <begin position="388"/>
        <end position="401"/>
    </location>
</feature>
<feature type="turn" evidence="3">
    <location>
        <begin position="402"/>
        <end position="404"/>
    </location>
</feature>
<feature type="strand" evidence="3">
    <location>
        <begin position="409"/>
        <end position="418"/>
    </location>
</feature>
<feature type="strand" evidence="4">
    <location>
        <begin position="423"/>
        <end position="425"/>
    </location>
</feature>
<feature type="strand" evidence="4">
    <location>
        <begin position="431"/>
        <end position="433"/>
    </location>
</feature>
<feature type="helix" evidence="3">
    <location>
        <begin position="434"/>
        <end position="442"/>
    </location>
</feature>
<feature type="strand" evidence="3">
    <location>
        <begin position="445"/>
        <end position="449"/>
    </location>
</feature>
<feature type="helix" evidence="3">
    <location>
        <begin position="451"/>
        <end position="462"/>
    </location>
</feature>
<feature type="strand" evidence="3">
    <location>
        <begin position="469"/>
        <end position="471"/>
    </location>
</feature>
<feature type="strand" evidence="3">
    <location>
        <begin position="473"/>
        <end position="475"/>
    </location>
</feature>
<feature type="strand" evidence="3">
    <location>
        <begin position="481"/>
        <end position="483"/>
    </location>
</feature>
<feature type="turn" evidence="3">
    <location>
        <begin position="484"/>
        <end position="487"/>
    </location>
</feature>
<feature type="helix" evidence="3">
    <location>
        <begin position="493"/>
        <end position="506"/>
    </location>
</feature>
<feature type="helix" evidence="3">
    <location>
        <begin position="509"/>
        <end position="513"/>
    </location>
</feature>
<feature type="helix" evidence="3">
    <location>
        <begin position="517"/>
        <end position="519"/>
    </location>
</feature>
<feature type="helix" evidence="3">
    <location>
        <begin position="522"/>
        <end position="530"/>
    </location>
</feature>
<feature type="strand" evidence="3">
    <location>
        <begin position="531"/>
        <end position="533"/>
    </location>
</feature>
<feature type="helix" evidence="3">
    <location>
        <begin position="540"/>
        <end position="545"/>
    </location>
</feature>
<feature type="helix" evidence="3">
    <location>
        <begin position="547"/>
        <end position="551"/>
    </location>
</feature>
<feature type="turn" evidence="3">
    <location>
        <begin position="552"/>
        <end position="559"/>
    </location>
</feature>
<feature type="strand" evidence="3">
    <location>
        <begin position="562"/>
        <end position="570"/>
    </location>
</feature>
<feature type="helix" evidence="3">
    <location>
        <begin position="571"/>
        <end position="574"/>
    </location>
</feature>
<feature type="helix" evidence="3">
    <location>
        <begin position="577"/>
        <end position="588"/>
    </location>
</feature>
<feature type="strand" evidence="3">
    <location>
        <begin position="589"/>
        <end position="591"/>
    </location>
</feature>
<feature type="strand" evidence="3">
    <location>
        <begin position="593"/>
        <end position="600"/>
    </location>
</feature>
<feature type="turn" evidence="3">
    <location>
        <begin position="613"/>
        <end position="616"/>
    </location>
</feature>
<feature type="helix" evidence="3">
    <location>
        <begin position="621"/>
        <end position="628"/>
    </location>
</feature>
<feature type="helix" evidence="3">
    <location>
        <begin position="630"/>
        <end position="638"/>
    </location>
</feature>
<feature type="helix" evidence="3">
    <location>
        <begin position="650"/>
        <end position="674"/>
    </location>
</feature>
<feature type="helix" evidence="3">
    <location>
        <begin position="679"/>
        <end position="683"/>
    </location>
</feature>
<feature type="helix" evidence="3">
    <location>
        <begin position="690"/>
        <end position="711"/>
    </location>
</feature>
<feature type="helix" evidence="3">
    <location>
        <begin position="715"/>
        <end position="727"/>
    </location>
</feature>
<feature type="helix" evidence="3">
    <location>
        <begin position="728"/>
        <end position="733"/>
    </location>
</feature>
<feature type="helix" evidence="3">
    <location>
        <begin position="734"/>
        <end position="744"/>
    </location>
</feature>
<feature type="helix" evidence="3">
    <location>
        <begin position="750"/>
        <end position="770"/>
    </location>
</feature>
<feature type="turn" evidence="3">
    <location>
        <begin position="771"/>
        <end position="773"/>
    </location>
</feature>
<feature type="helix" evidence="3">
    <location>
        <begin position="775"/>
        <end position="783"/>
    </location>
</feature>
<feature type="helix" evidence="3">
    <location>
        <begin position="786"/>
        <end position="792"/>
    </location>
</feature>
<feature type="helix" evidence="3">
    <location>
        <begin position="797"/>
        <end position="799"/>
    </location>
</feature>
<feature type="helix" evidence="3">
    <location>
        <begin position="805"/>
        <end position="808"/>
    </location>
</feature>
<feature type="helix" evidence="3">
    <location>
        <begin position="821"/>
        <end position="839"/>
    </location>
</feature>
<feature type="helix" evidence="3">
    <location>
        <begin position="846"/>
        <end position="848"/>
    </location>
</feature>
<feature type="strand" evidence="3">
    <location>
        <begin position="849"/>
        <end position="854"/>
    </location>
</feature>
<feature type="helix" evidence="3">
    <location>
        <begin position="860"/>
        <end position="867"/>
    </location>
</feature>
<feature type="strand" evidence="3">
    <location>
        <begin position="870"/>
        <end position="873"/>
    </location>
</feature>
<feature type="strand" evidence="3">
    <location>
        <begin position="876"/>
        <end position="881"/>
    </location>
</feature>
<feature type="strand" evidence="3">
    <location>
        <begin position="883"/>
        <end position="889"/>
    </location>
</feature>
<feature type="strand" evidence="3">
    <location>
        <begin position="891"/>
        <end position="893"/>
    </location>
</feature>
<feature type="turn" evidence="3">
    <location>
        <begin position="896"/>
        <end position="898"/>
    </location>
</feature>
<feature type="strand" evidence="3">
    <location>
        <begin position="903"/>
        <end position="905"/>
    </location>
</feature>
<feature type="helix" evidence="3">
    <location>
        <begin position="911"/>
        <end position="918"/>
    </location>
</feature>
<evidence type="ECO:0000255" key="1">
    <source>
        <dbReference type="HAMAP-Rule" id="MF_02002"/>
    </source>
</evidence>
<evidence type="ECO:0007829" key="2">
    <source>
        <dbReference type="PDB" id="8WNF"/>
    </source>
</evidence>
<evidence type="ECO:0007829" key="3">
    <source>
        <dbReference type="PDB" id="8WNJ"/>
    </source>
</evidence>
<evidence type="ECO:0007829" key="4">
    <source>
        <dbReference type="PDB" id="8WO2"/>
    </source>
</evidence>
<sequence>MEEYKDTLNLNTTTFSMKGNLSVNEPKTYAKWQEQQAFKRMQARKDNHGDFTLHDGPPYANGHLHLGHALNKILKDIVVKREYFKGKKIYYTPGWDCHGLPIEQQILERLEKEKTSLENPTLFREKCRDHAKKFLEIQKNEFLQLGVLGDFEDPYKTMDFKFEASIYRALVEVAKKGLLKERHKPIYWSYACESALAEAEVEYKMKKSPSIFVAFGLKKESLEKLKVKKASLVIWTTTPWTLYANVAIALKKDAVYALTQKGYLVAKALHEKLAALGVVDNEITHEFNSNDLEYLVATNPLNQRDSLVALGEHVGLEDGTGAVHTAPGHGEEDYYLGLRYNLEVLMSVDEKGCYDEGIIHNQLLDESYLGEHVFKAQKRIIEQLGDSLLLEQEIEHSYPHCWRTHKPVIYRATTQWFILMDEPFIQNDGSQKTLREVALDAIEKVEFVPSSGKNRLKTMIENRPDWCLSRQRKWGVPLAFFIDKRTNKPCFESEVLEHVANLFEKKGCDVWWEYSVKDLLPPSYQEDAKHYEKIMHILDVWFDSGSTFKAVLEDYHGEKGQSPSDVILEGSDQHRGWFQSSLLIGCVLNNQAPFKKVITHGFIVDEKGEKMSKSKGNVVSLDKLLKTHGSDVVRLWVAFNDYQNDLRVSQTFFTQTEQHYKKFRNTLKFLLANFSDMDLKNLERPHNFSPLDHFMLETLETISAGVNSAFEEHDFVKGLNILMAFVTNELSGIYLDACKDSLYCDSKNNEKRQAIQMVLLATASKLCYFLAPILTHTIEEVLEHSQALRIFLQAKDVFDLKDISVSEKLHLKEFKKPENFEAVLALRSAFNEELDRLKKEGVIKNSLECAIEVKEKALDENLVEELLMVSFVGIAKEKLSETPAFTLFKAPFYKCPRCWRFKSELENTPCKRCEQVLKER</sequence>
<reference key="1">
    <citation type="journal article" date="1997" name="Nature">
        <title>The complete genome sequence of the gastric pathogen Helicobacter pylori.</title>
        <authorList>
            <person name="Tomb J.-F."/>
            <person name="White O."/>
            <person name="Kerlavage A.R."/>
            <person name="Clayton R.A."/>
            <person name="Sutton G.G."/>
            <person name="Fleischmann R.D."/>
            <person name="Ketchum K.A."/>
            <person name="Klenk H.-P."/>
            <person name="Gill S.R."/>
            <person name="Dougherty B.A."/>
            <person name="Nelson K.E."/>
            <person name="Quackenbush J."/>
            <person name="Zhou L."/>
            <person name="Kirkness E.F."/>
            <person name="Peterson S.N."/>
            <person name="Loftus B.J."/>
            <person name="Richardson D.L."/>
            <person name="Dodson R.J."/>
            <person name="Khalak H.G."/>
            <person name="Glodek A."/>
            <person name="McKenney K."/>
            <person name="FitzGerald L.M."/>
            <person name="Lee N."/>
            <person name="Adams M.D."/>
            <person name="Hickey E.K."/>
            <person name="Berg D.E."/>
            <person name="Gocayne J.D."/>
            <person name="Utterback T.R."/>
            <person name="Peterson J.D."/>
            <person name="Kelley J.M."/>
            <person name="Cotton M.D."/>
            <person name="Weidman J.F."/>
            <person name="Fujii C."/>
            <person name="Bowman C."/>
            <person name="Watthey L."/>
            <person name="Wallin E."/>
            <person name="Hayes W.S."/>
            <person name="Borodovsky M."/>
            <person name="Karp P.D."/>
            <person name="Smith H.O."/>
            <person name="Fraser C.M."/>
            <person name="Venter J.C."/>
        </authorList>
    </citation>
    <scope>NUCLEOTIDE SEQUENCE [LARGE SCALE GENOMIC DNA]</scope>
    <source>
        <strain>ATCC 700392 / 26695</strain>
    </source>
</reference>
<accession>P56456</accession>
<comment type="function">
    <text evidence="1">Catalyzes the attachment of isoleucine to tRNA(Ile). As IleRS can inadvertently accommodate and process structurally similar amino acids such as valine, to avoid such errors it has two additional distinct tRNA(Ile)-dependent editing activities. One activity is designated as 'pretransfer' editing and involves the hydrolysis of activated Val-AMP. The other activity is designated 'posttransfer' editing and involves deacylation of mischarged Val-tRNA(Ile).</text>
</comment>
<comment type="catalytic activity">
    <reaction evidence="1">
        <text>tRNA(Ile) + L-isoleucine + ATP = L-isoleucyl-tRNA(Ile) + AMP + diphosphate</text>
        <dbReference type="Rhea" id="RHEA:11060"/>
        <dbReference type="Rhea" id="RHEA-COMP:9666"/>
        <dbReference type="Rhea" id="RHEA-COMP:9695"/>
        <dbReference type="ChEBI" id="CHEBI:30616"/>
        <dbReference type="ChEBI" id="CHEBI:33019"/>
        <dbReference type="ChEBI" id="CHEBI:58045"/>
        <dbReference type="ChEBI" id="CHEBI:78442"/>
        <dbReference type="ChEBI" id="CHEBI:78528"/>
        <dbReference type="ChEBI" id="CHEBI:456215"/>
        <dbReference type="EC" id="6.1.1.5"/>
    </reaction>
</comment>
<comment type="cofactor">
    <cofactor evidence="1">
        <name>Zn(2+)</name>
        <dbReference type="ChEBI" id="CHEBI:29105"/>
    </cofactor>
    <text evidence="1">Binds 1 zinc ion per subunit.</text>
</comment>
<comment type="subunit">
    <text evidence="1">Monomer.</text>
</comment>
<comment type="subcellular location">
    <subcellularLocation>
        <location evidence="1">Cytoplasm</location>
    </subcellularLocation>
</comment>
<comment type="domain">
    <text evidence="1">IleRS has two distinct active sites: one for aminoacylation and one for editing. The misactivated valine is translocated from the active site to the editing site, which sterically excludes the correctly activated isoleucine. The single editing site contains two valyl binding pockets, one specific for each substrate (Val-AMP or Val-tRNA(Ile)).</text>
</comment>
<comment type="similarity">
    <text evidence="1">Belongs to the class-I aminoacyl-tRNA synthetase family. IleS type 1 subfamily.</text>
</comment>
<keyword id="KW-0002">3D-structure</keyword>
<keyword id="KW-0030">Aminoacyl-tRNA synthetase</keyword>
<keyword id="KW-0067">ATP-binding</keyword>
<keyword id="KW-0963">Cytoplasm</keyword>
<keyword id="KW-0436">Ligase</keyword>
<keyword id="KW-0479">Metal-binding</keyword>
<keyword id="KW-0547">Nucleotide-binding</keyword>
<keyword id="KW-0648">Protein biosynthesis</keyword>
<keyword id="KW-1185">Reference proteome</keyword>
<keyword id="KW-0862">Zinc</keyword>
<organism>
    <name type="scientific">Helicobacter pylori (strain ATCC 700392 / 26695)</name>
    <name type="common">Campylobacter pylori</name>
    <dbReference type="NCBI Taxonomy" id="85962"/>
    <lineage>
        <taxon>Bacteria</taxon>
        <taxon>Pseudomonadati</taxon>
        <taxon>Campylobacterota</taxon>
        <taxon>Epsilonproteobacteria</taxon>
        <taxon>Campylobacterales</taxon>
        <taxon>Helicobacteraceae</taxon>
        <taxon>Helicobacter</taxon>
    </lineage>
</organism>
<dbReference type="EC" id="6.1.1.5" evidence="1"/>
<dbReference type="EMBL" id="AE000511">
    <property type="protein sequence ID" value="AAD08464.1"/>
    <property type="molecule type" value="Genomic_DNA"/>
</dbReference>
<dbReference type="PIR" id="F64697">
    <property type="entry name" value="F64697"/>
</dbReference>
<dbReference type="RefSeq" id="NP_208213.1">
    <property type="nucleotide sequence ID" value="NC_000915.1"/>
</dbReference>
<dbReference type="PDB" id="8WNF">
    <property type="method" value="X-ray"/>
    <property type="resolution" value="1.90 A"/>
    <property type="chains" value="A=1-920"/>
</dbReference>
<dbReference type="PDB" id="8WNG">
    <property type="method" value="X-ray"/>
    <property type="resolution" value="1.92 A"/>
    <property type="chains" value="A=1-920"/>
</dbReference>
<dbReference type="PDB" id="8WNI">
    <property type="method" value="X-ray"/>
    <property type="resolution" value="1.95 A"/>
    <property type="chains" value="A=1-920"/>
</dbReference>
<dbReference type="PDB" id="8WNJ">
    <property type="method" value="X-ray"/>
    <property type="resolution" value="1.78 A"/>
    <property type="chains" value="A=1-920"/>
</dbReference>
<dbReference type="PDB" id="8WO2">
    <property type="method" value="X-ray"/>
    <property type="resolution" value="2.34 A"/>
    <property type="chains" value="A=1-920"/>
</dbReference>
<dbReference type="PDB" id="8WO3">
    <property type="method" value="X-ray"/>
    <property type="resolution" value="2.20 A"/>
    <property type="chains" value="A=1-920"/>
</dbReference>
<dbReference type="PDBsum" id="8WNF"/>
<dbReference type="PDBsum" id="8WNG"/>
<dbReference type="PDBsum" id="8WNI"/>
<dbReference type="PDBsum" id="8WNJ"/>
<dbReference type="PDBsum" id="8WO2"/>
<dbReference type="PDBsum" id="8WO3"/>
<dbReference type="SMR" id="P56456"/>
<dbReference type="DIP" id="DIP-3571N"/>
<dbReference type="FunCoup" id="P56456">
    <property type="interactions" value="357"/>
</dbReference>
<dbReference type="IntAct" id="P56456">
    <property type="interactions" value="4"/>
</dbReference>
<dbReference type="MINT" id="P56456"/>
<dbReference type="STRING" id="85962.HP_1422"/>
<dbReference type="PaxDb" id="85962-C694_07355"/>
<dbReference type="EnsemblBacteria" id="AAD08464">
    <property type="protein sequence ID" value="AAD08464"/>
    <property type="gene ID" value="HP_1422"/>
</dbReference>
<dbReference type="KEGG" id="hpy:HP_1422"/>
<dbReference type="PATRIC" id="fig|85962.8.peg.1491"/>
<dbReference type="eggNOG" id="COG0060">
    <property type="taxonomic scope" value="Bacteria"/>
</dbReference>
<dbReference type="InParanoid" id="P56456"/>
<dbReference type="OrthoDB" id="9810365at2"/>
<dbReference type="PhylomeDB" id="P56456"/>
<dbReference type="Proteomes" id="UP000000429">
    <property type="component" value="Chromosome"/>
</dbReference>
<dbReference type="GO" id="GO:0005829">
    <property type="term" value="C:cytosol"/>
    <property type="evidence" value="ECO:0000318"/>
    <property type="project" value="GO_Central"/>
</dbReference>
<dbReference type="GO" id="GO:0002161">
    <property type="term" value="F:aminoacyl-tRNA deacylase activity"/>
    <property type="evidence" value="ECO:0007669"/>
    <property type="project" value="InterPro"/>
</dbReference>
<dbReference type="GO" id="GO:0005524">
    <property type="term" value="F:ATP binding"/>
    <property type="evidence" value="ECO:0007669"/>
    <property type="project" value="UniProtKB-UniRule"/>
</dbReference>
<dbReference type="GO" id="GO:0004822">
    <property type="term" value="F:isoleucine-tRNA ligase activity"/>
    <property type="evidence" value="ECO:0000318"/>
    <property type="project" value="GO_Central"/>
</dbReference>
<dbReference type="GO" id="GO:0000049">
    <property type="term" value="F:tRNA binding"/>
    <property type="evidence" value="ECO:0007669"/>
    <property type="project" value="InterPro"/>
</dbReference>
<dbReference type="GO" id="GO:0008270">
    <property type="term" value="F:zinc ion binding"/>
    <property type="evidence" value="ECO:0007669"/>
    <property type="project" value="UniProtKB-UniRule"/>
</dbReference>
<dbReference type="GO" id="GO:0006428">
    <property type="term" value="P:isoleucyl-tRNA aminoacylation"/>
    <property type="evidence" value="ECO:0000318"/>
    <property type="project" value="GO_Central"/>
</dbReference>
<dbReference type="CDD" id="cd07960">
    <property type="entry name" value="Anticodon_Ia_Ile_BEm"/>
    <property type="match status" value="1"/>
</dbReference>
<dbReference type="CDD" id="cd00818">
    <property type="entry name" value="IleRS_core"/>
    <property type="match status" value="1"/>
</dbReference>
<dbReference type="FunFam" id="1.10.730.20:FF:000007">
    <property type="entry name" value="Isoleucine--tRNA ligase"/>
    <property type="match status" value="1"/>
</dbReference>
<dbReference type="FunFam" id="3.40.50.620:FF:000168">
    <property type="entry name" value="Isoleucine--tRNA ligase"/>
    <property type="match status" value="1"/>
</dbReference>
<dbReference type="Gene3D" id="1.10.730.20">
    <property type="match status" value="1"/>
</dbReference>
<dbReference type="Gene3D" id="3.40.50.620">
    <property type="entry name" value="HUPs"/>
    <property type="match status" value="2"/>
</dbReference>
<dbReference type="Gene3D" id="1.10.10.830">
    <property type="entry name" value="Ile-tRNA synthetase CP2 domain-like"/>
    <property type="match status" value="1"/>
</dbReference>
<dbReference type="HAMAP" id="MF_02002">
    <property type="entry name" value="Ile_tRNA_synth_type1"/>
    <property type="match status" value="1"/>
</dbReference>
<dbReference type="InterPro" id="IPR001412">
    <property type="entry name" value="aa-tRNA-synth_I_CS"/>
</dbReference>
<dbReference type="InterPro" id="IPR002300">
    <property type="entry name" value="aa-tRNA-synth_Ia"/>
</dbReference>
<dbReference type="InterPro" id="IPR033708">
    <property type="entry name" value="Anticodon_Ile_BEm"/>
</dbReference>
<dbReference type="InterPro" id="IPR002301">
    <property type="entry name" value="Ile-tRNA-ligase"/>
</dbReference>
<dbReference type="InterPro" id="IPR023585">
    <property type="entry name" value="Ile-tRNA-ligase_type1"/>
</dbReference>
<dbReference type="InterPro" id="IPR050081">
    <property type="entry name" value="Ile-tRNA_ligase"/>
</dbReference>
<dbReference type="InterPro" id="IPR013155">
    <property type="entry name" value="M/V/L/I-tRNA-synth_anticd-bd"/>
</dbReference>
<dbReference type="InterPro" id="IPR014729">
    <property type="entry name" value="Rossmann-like_a/b/a_fold"/>
</dbReference>
<dbReference type="InterPro" id="IPR009080">
    <property type="entry name" value="tRNAsynth_Ia_anticodon-bd"/>
</dbReference>
<dbReference type="InterPro" id="IPR009008">
    <property type="entry name" value="Val/Leu/Ile-tRNA-synth_edit"/>
</dbReference>
<dbReference type="NCBIfam" id="TIGR00392">
    <property type="entry name" value="ileS"/>
    <property type="match status" value="1"/>
</dbReference>
<dbReference type="PANTHER" id="PTHR42765:SF1">
    <property type="entry name" value="ISOLEUCINE--TRNA LIGASE, MITOCHONDRIAL"/>
    <property type="match status" value="1"/>
</dbReference>
<dbReference type="PANTHER" id="PTHR42765">
    <property type="entry name" value="SOLEUCYL-TRNA SYNTHETASE"/>
    <property type="match status" value="1"/>
</dbReference>
<dbReference type="Pfam" id="PF08264">
    <property type="entry name" value="Anticodon_1"/>
    <property type="match status" value="1"/>
</dbReference>
<dbReference type="Pfam" id="PF00133">
    <property type="entry name" value="tRNA-synt_1"/>
    <property type="match status" value="1"/>
</dbReference>
<dbReference type="PRINTS" id="PR00984">
    <property type="entry name" value="TRNASYNTHILE"/>
</dbReference>
<dbReference type="SUPFAM" id="SSF47323">
    <property type="entry name" value="Anticodon-binding domain of a subclass of class I aminoacyl-tRNA synthetases"/>
    <property type="match status" value="1"/>
</dbReference>
<dbReference type="SUPFAM" id="SSF52374">
    <property type="entry name" value="Nucleotidylyl transferase"/>
    <property type="match status" value="1"/>
</dbReference>
<dbReference type="SUPFAM" id="SSF50677">
    <property type="entry name" value="ValRS/IleRS/LeuRS editing domain"/>
    <property type="match status" value="1"/>
</dbReference>
<dbReference type="PROSITE" id="PS00178">
    <property type="entry name" value="AA_TRNA_LIGASE_I"/>
    <property type="match status" value="1"/>
</dbReference>
<protein>
    <recommendedName>
        <fullName evidence="1">Isoleucine--tRNA ligase</fullName>
        <ecNumber evidence="1">6.1.1.5</ecNumber>
    </recommendedName>
    <alternativeName>
        <fullName evidence="1">Isoleucyl-tRNA synthetase</fullName>
        <shortName evidence="1">IleRS</shortName>
    </alternativeName>
</protein>
<name>SYI_HELPY</name>
<gene>
    <name evidence="1" type="primary">ileS</name>
    <name type="ordered locus">HP_1422</name>
</gene>